<dbReference type="EC" id="6.3.2.6" evidence="1"/>
<dbReference type="EMBL" id="AM260479">
    <property type="protein sequence ID" value="CAJ91718.1"/>
    <property type="molecule type" value="Genomic_DNA"/>
</dbReference>
<dbReference type="RefSeq" id="WP_010812196.1">
    <property type="nucleotide sequence ID" value="NZ_CP039287.1"/>
</dbReference>
<dbReference type="SMR" id="Q0KE53"/>
<dbReference type="STRING" id="381666.H16_A0569"/>
<dbReference type="KEGG" id="reh:H16_A0569"/>
<dbReference type="eggNOG" id="COG0152">
    <property type="taxonomic scope" value="Bacteria"/>
</dbReference>
<dbReference type="HOGENOM" id="CLU_045637_0_0_4"/>
<dbReference type="OrthoDB" id="9801549at2"/>
<dbReference type="UniPathway" id="UPA00074">
    <property type="reaction ID" value="UER00131"/>
</dbReference>
<dbReference type="Proteomes" id="UP000008210">
    <property type="component" value="Chromosome 1"/>
</dbReference>
<dbReference type="GO" id="GO:0005737">
    <property type="term" value="C:cytoplasm"/>
    <property type="evidence" value="ECO:0007669"/>
    <property type="project" value="TreeGrafter"/>
</dbReference>
<dbReference type="GO" id="GO:0005524">
    <property type="term" value="F:ATP binding"/>
    <property type="evidence" value="ECO:0007669"/>
    <property type="project" value="UniProtKB-KW"/>
</dbReference>
<dbReference type="GO" id="GO:0004639">
    <property type="term" value="F:phosphoribosylaminoimidazolesuccinocarboxamide synthase activity"/>
    <property type="evidence" value="ECO:0007669"/>
    <property type="project" value="UniProtKB-UniRule"/>
</dbReference>
<dbReference type="GO" id="GO:0006189">
    <property type="term" value="P:'de novo' IMP biosynthetic process"/>
    <property type="evidence" value="ECO:0007669"/>
    <property type="project" value="UniProtKB-UniRule"/>
</dbReference>
<dbReference type="CDD" id="cd01414">
    <property type="entry name" value="SAICAR_synt_Sc"/>
    <property type="match status" value="1"/>
</dbReference>
<dbReference type="FunFam" id="3.30.470.20:FF:000015">
    <property type="entry name" value="Phosphoribosylaminoimidazole-succinocarboxamide synthase"/>
    <property type="match status" value="1"/>
</dbReference>
<dbReference type="Gene3D" id="3.30.470.20">
    <property type="entry name" value="ATP-grasp fold, B domain"/>
    <property type="match status" value="1"/>
</dbReference>
<dbReference type="Gene3D" id="3.30.200.20">
    <property type="entry name" value="Phosphorylase Kinase, domain 1"/>
    <property type="match status" value="1"/>
</dbReference>
<dbReference type="HAMAP" id="MF_00137">
    <property type="entry name" value="SAICAR_synth"/>
    <property type="match status" value="1"/>
</dbReference>
<dbReference type="InterPro" id="IPR028923">
    <property type="entry name" value="SAICAR_synt/ADE2_N"/>
</dbReference>
<dbReference type="InterPro" id="IPR001636">
    <property type="entry name" value="SAICAR_synth"/>
</dbReference>
<dbReference type="InterPro" id="IPR018236">
    <property type="entry name" value="SAICAR_synthetase_CS"/>
</dbReference>
<dbReference type="NCBIfam" id="NF010568">
    <property type="entry name" value="PRK13961.1"/>
    <property type="match status" value="1"/>
</dbReference>
<dbReference type="NCBIfam" id="TIGR00081">
    <property type="entry name" value="purC"/>
    <property type="match status" value="1"/>
</dbReference>
<dbReference type="PANTHER" id="PTHR43700">
    <property type="entry name" value="PHOSPHORIBOSYLAMINOIMIDAZOLE-SUCCINOCARBOXAMIDE SYNTHASE"/>
    <property type="match status" value="1"/>
</dbReference>
<dbReference type="PANTHER" id="PTHR43700:SF1">
    <property type="entry name" value="PHOSPHORIBOSYLAMINOIMIDAZOLE-SUCCINOCARBOXAMIDE SYNTHASE"/>
    <property type="match status" value="1"/>
</dbReference>
<dbReference type="Pfam" id="PF01259">
    <property type="entry name" value="SAICAR_synt"/>
    <property type="match status" value="1"/>
</dbReference>
<dbReference type="SUPFAM" id="SSF56104">
    <property type="entry name" value="SAICAR synthase-like"/>
    <property type="match status" value="1"/>
</dbReference>
<dbReference type="PROSITE" id="PS01057">
    <property type="entry name" value="SAICAR_SYNTHETASE_1"/>
    <property type="match status" value="1"/>
</dbReference>
<dbReference type="PROSITE" id="PS01058">
    <property type="entry name" value="SAICAR_SYNTHETASE_2"/>
    <property type="match status" value="1"/>
</dbReference>
<sequence length="302" mass="33396">MSNALYQSSINSLPLLGHGKVRDNYAVGNDKLLIVTTDRLSAFDVIMGEPIPDKGRVLNQMANFWFRKLAHIVPNHETGIAPETVVAPEEVEQVKGRAVVVKRLRPILVEAVVRGYLAGSGWKDYQATGKVCGIELPAGLQNAQKLPEPIFTPAAKAEMGEHDENISFAEVEARIGIALARQMRDISIRLYKEAAEFAATRGIIIADTKFEFGLDDNGVLTLMDEVLTADSSRFWPADSYQVGTNPPSFDKQFVRDWLEAVRIDGKPWPKTAPAPQLPDEVIEKTAAKYREALTRLTGEELQ</sequence>
<keyword id="KW-0067">ATP-binding</keyword>
<keyword id="KW-0436">Ligase</keyword>
<keyword id="KW-0547">Nucleotide-binding</keyword>
<keyword id="KW-0658">Purine biosynthesis</keyword>
<keyword id="KW-1185">Reference proteome</keyword>
<organism>
    <name type="scientific">Cupriavidus necator (strain ATCC 17699 / DSM 428 / KCTC 22496 / NCIMB 10442 / H16 / Stanier 337)</name>
    <name type="common">Ralstonia eutropha</name>
    <dbReference type="NCBI Taxonomy" id="381666"/>
    <lineage>
        <taxon>Bacteria</taxon>
        <taxon>Pseudomonadati</taxon>
        <taxon>Pseudomonadota</taxon>
        <taxon>Betaproteobacteria</taxon>
        <taxon>Burkholderiales</taxon>
        <taxon>Burkholderiaceae</taxon>
        <taxon>Cupriavidus</taxon>
    </lineage>
</organism>
<feature type="chain" id="PRO_1000018765" description="Phosphoribosylaminoimidazole-succinocarboxamide synthase">
    <location>
        <begin position="1"/>
        <end position="302"/>
    </location>
</feature>
<evidence type="ECO:0000255" key="1">
    <source>
        <dbReference type="HAMAP-Rule" id="MF_00137"/>
    </source>
</evidence>
<protein>
    <recommendedName>
        <fullName evidence="1">Phosphoribosylaminoimidazole-succinocarboxamide synthase</fullName>
        <ecNumber evidence="1">6.3.2.6</ecNumber>
    </recommendedName>
    <alternativeName>
        <fullName evidence="1">SAICAR synthetase</fullName>
    </alternativeName>
</protein>
<gene>
    <name evidence="1" type="primary">purC</name>
    <name type="ordered locus">H16_A0569</name>
</gene>
<reference key="1">
    <citation type="journal article" date="2006" name="Nat. Biotechnol.">
        <title>Genome sequence of the bioplastic-producing 'Knallgas' bacterium Ralstonia eutropha H16.</title>
        <authorList>
            <person name="Pohlmann A."/>
            <person name="Fricke W.F."/>
            <person name="Reinecke F."/>
            <person name="Kusian B."/>
            <person name="Liesegang H."/>
            <person name="Cramm R."/>
            <person name="Eitinger T."/>
            <person name="Ewering C."/>
            <person name="Poetter M."/>
            <person name="Schwartz E."/>
            <person name="Strittmatter A."/>
            <person name="Voss I."/>
            <person name="Gottschalk G."/>
            <person name="Steinbuechel A."/>
            <person name="Friedrich B."/>
            <person name="Bowien B."/>
        </authorList>
    </citation>
    <scope>NUCLEOTIDE SEQUENCE [LARGE SCALE GENOMIC DNA]</scope>
    <source>
        <strain>ATCC 17699 / DSM 428 / KCTC 22496 / NCIMB 10442 / H16 / Stanier 337</strain>
    </source>
</reference>
<accession>Q0KE53</accession>
<name>PUR7_CUPNH</name>
<proteinExistence type="inferred from homology"/>
<comment type="catalytic activity">
    <reaction evidence="1">
        <text>5-amino-1-(5-phospho-D-ribosyl)imidazole-4-carboxylate + L-aspartate + ATP = (2S)-2-[5-amino-1-(5-phospho-beta-D-ribosyl)imidazole-4-carboxamido]succinate + ADP + phosphate + 2 H(+)</text>
        <dbReference type="Rhea" id="RHEA:22628"/>
        <dbReference type="ChEBI" id="CHEBI:15378"/>
        <dbReference type="ChEBI" id="CHEBI:29991"/>
        <dbReference type="ChEBI" id="CHEBI:30616"/>
        <dbReference type="ChEBI" id="CHEBI:43474"/>
        <dbReference type="ChEBI" id="CHEBI:58443"/>
        <dbReference type="ChEBI" id="CHEBI:77657"/>
        <dbReference type="ChEBI" id="CHEBI:456216"/>
        <dbReference type="EC" id="6.3.2.6"/>
    </reaction>
</comment>
<comment type="pathway">
    <text evidence="1">Purine metabolism; IMP biosynthesis via de novo pathway; 5-amino-1-(5-phospho-D-ribosyl)imidazole-4-carboxamide from 5-amino-1-(5-phospho-D-ribosyl)imidazole-4-carboxylate: step 1/2.</text>
</comment>
<comment type="similarity">
    <text evidence="1">Belongs to the SAICAR synthetase family.</text>
</comment>